<gene>
    <name evidence="1" type="primary">gcvT</name>
    <name type="ordered locus">BWG_2630</name>
</gene>
<name>GCST_ECOBW</name>
<dbReference type="EC" id="2.1.2.10" evidence="1"/>
<dbReference type="EMBL" id="CP001396">
    <property type="protein sequence ID" value="ACR61978.1"/>
    <property type="molecule type" value="Genomic_DNA"/>
</dbReference>
<dbReference type="RefSeq" id="WP_000068701.1">
    <property type="nucleotide sequence ID" value="NC_012759.1"/>
</dbReference>
<dbReference type="SMR" id="C5A0H7"/>
<dbReference type="GeneID" id="75205258"/>
<dbReference type="KEGG" id="ebw:BWG_2630"/>
<dbReference type="HOGENOM" id="CLU_007884_10_2_6"/>
<dbReference type="GO" id="GO:0005829">
    <property type="term" value="C:cytosol"/>
    <property type="evidence" value="ECO:0007669"/>
    <property type="project" value="TreeGrafter"/>
</dbReference>
<dbReference type="GO" id="GO:0005960">
    <property type="term" value="C:glycine cleavage complex"/>
    <property type="evidence" value="ECO:0007669"/>
    <property type="project" value="InterPro"/>
</dbReference>
<dbReference type="GO" id="GO:0004047">
    <property type="term" value="F:aminomethyltransferase activity"/>
    <property type="evidence" value="ECO:0007669"/>
    <property type="project" value="UniProtKB-UniRule"/>
</dbReference>
<dbReference type="GO" id="GO:0008483">
    <property type="term" value="F:transaminase activity"/>
    <property type="evidence" value="ECO:0007669"/>
    <property type="project" value="UniProtKB-KW"/>
</dbReference>
<dbReference type="GO" id="GO:0019464">
    <property type="term" value="P:glycine decarboxylation via glycine cleavage system"/>
    <property type="evidence" value="ECO:0007669"/>
    <property type="project" value="UniProtKB-UniRule"/>
</dbReference>
<dbReference type="FunFam" id="2.40.30.110:FF:000001">
    <property type="entry name" value="Aminomethyltransferase"/>
    <property type="match status" value="1"/>
</dbReference>
<dbReference type="FunFam" id="3.30.70.1400:FF:000001">
    <property type="entry name" value="Aminomethyltransferase"/>
    <property type="match status" value="1"/>
</dbReference>
<dbReference type="FunFam" id="4.10.1250.10:FF:000001">
    <property type="entry name" value="Aminomethyltransferase"/>
    <property type="match status" value="1"/>
</dbReference>
<dbReference type="Gene3D" id="2.40.30.110">
    <property type="entry name" value="Aminomethyltransferase beta-barrel domains"/>
    <property type="match status" value="1"/>
</dbReference>
<dbReference type="Gene3D" id="3.30.70.1400">
    <property type="entry name" value="Aminomethyltransferase beta-barrel domains"/>
    <property type="match status" value="1"/>
</dbReference>
<dbReference type="Gene3D" id="4.10.1250.10">
    <property type="entry name" value="Aminomethyltransferase fragment"/>
    <property type="match status" value="1"/>
</dbReference>
<dbReference type="Gene3D" id="3.30.1360.120">
    <property type="entry name" value="Probable tRNA modification gtpase trme, domain 1"/>
    <property type="match status" value="1"/>
</dbReference>
<dbReference type="HAMAP" id="MF_00259">
    <property type="entry name" value="GcvT"/>
    <property type="match status" value="1"/>
</dbReference>
<dbReference type="InterPro" id="IPR006223">
    <property type="entry name" value="GCS_T"/>
</dbReference>
<dbReference type="InterPro" id="IPR022903">
    <property type="entry name" value="GCS_T_bac"/>
</dbReference>
<dbReference type="InterPro" id="IPR013977">
    <property type="entry name" value="GCST_C"/>
</dbReference>
<dbReference type="InterPro" id="IPR006222">
    <property type="entry name" value="GCV_T_N"/>
</dbReference>
<dbReference type="InterPro" id="IPR028896">
    <property type="entry name" value="GcvT/YgfZ/DmdA"/>
</dbReference>
<dbReference type="InterPro" id="IPR029043">
    <property type="entry name" value="GcvT/YgfZ_C"/>
</dbReference>
<dbReference type="InterPro" id="IPR027266">
    <property type="entry name" value="TrmE/GcvT_dom1"/>
</dbReference>
<dbReference type="NCBIfam" id="TIGR00528">
    <property type="entry name" value="gcvT"/>
    <property type="match status" value="1"/>
</dbReference>
<dbReference type="NCBIfam" id="NF001567">
    <property type="entry name" value="PRK00389.1"/>
    <property type="match status" value="1"/>
</dbReference>
<dbReference type="PANTHER" id="PTHR43757">
    <property type="entry name" value="AMINOMETHYLTRANSFERASE"/>
    <property type="match status" value="1"/>
</dbReference>
<dbReference type="PANTHER" id="PTHR43757:SF2">
    <property type="entry name" value="AMINOMETHYLTRANSFERASE, MITOCHONDRIAL"/>
    <property type="match status" value="1"/>
</dbReference>
<dbReference type="Pfam" id="PF01571">
    <property type="entry name" value="GCV_T"/>
    <property type="match status" value="1"/>
</dbReference>
<dbReference type="Pfam" id="PF08669">
    <property type="entry name" value="GCV_T_C"/>
    <property type="match status" value="1"/>
</dbReference>
<dbReference type="PIRSF" id="PIRSF006487">
    <property type="entry name" value="GcvT"/>
    <property type="match status" value="1"/>
</dbReference>
<dbReference type="SUPFAM" id="SSF101790">
    <property type="entry name" value="Aminomethyltransferase beta-barrel domain"/>
    <property type="match status" value="1"/>
</dbReference>
<dbReference type="SUPFAM" id="SSF103025">
    <property type="entry name" value="Folate-binding domain"/>
    <property type="match status" value="1"/>
</dbReference>
<accession>C5A0H7</accession>
<proteinExistence type="inferred from homology"/>
<keyword id="KW-0032">Aminotransferase</keyword>
<keyword id="KW-0808">Transferase</keyword>
<sequence length="364" mass="40147">MAQQTPLYEQHTLCGARMVDFHGWMMPLHYGSQIDEHHAVRTDAGMFDVSHMTIVDLRGSRTREFLRYLLANDVAKLTKSGKALYSGMLNASGGVIDDLIVYYFTEDFFRLVVNSATREKDLSWITQHAEPFGIEITVRDDLSMIAVQGPNAQAKAATLFNDAQRQAVEGMKPFFGVQAGDLFIATTGYTGEAGYEIALPNEKAADFWRALVEAGVKPCGLGARDTLRLEAGMNLYGQEMDETISPLAANMGWTIAWEPADRDFIGREALEVQREHGTEKLVGLVMTEKGVLRNELPVRFTDAQGNQHEGIITSGTFSPTLGYSIALARVPEGIGETAIVQIRNREMPVKVTKPVFVRNGKAVA</sequence>
<evidence type="ECO:0000255" key="1">
    <source>
        <dbReference type="HAMAP-Rule" id="MF_00259"/>
    </source>
</evidence>
<reference key="1">
    <citation type="journal article" date="2009" name="J. Bacteriol.">
        <title>Genomic sequencing reveals regulatory mutations and recombinational events in the widely used MC4100 lineage of Escherichia coli K-12.</title>
        <authorList>
            <person name="Ferenci T."/>
            <person name="Zhou Z."/>
            <person name="Betteridge T."/>
            <person name="Ren Y."/>
            <person name="Liu Y."/>
            <person name="Feng L."/>
            <person name="Reeves P.R."/>
            <person name="Wang L."/>
        </authorList>
    </citation>
    <scope>NUCLEOTIDE SEQUENCE [LARGE SCALE GENOMIC DNA]</scope>
    <source>
        <strain>K12 / MC4100 / BW2952</strain>
    </source>
</reference>
<organism>
    <name type="scientific">Escherichia coli (strain K12 / MC4100 / BW2952)</name>
    <dbReference type="NCBI Taxonomy" id="595496"/>
    <lineage>
        <taxon>Bacteria</taxon>
        <taxon>Pseudomonadati</taxon>
        <taxon>Pseudomonadota</taxon>
        <taxon>Gammaproteobacteria</taxon>
        <taxon>Enterobacterales</taxon>
        <taxon>Enterobacteriaceae</taxon>
        <taxon>Escherichia</taxon>
    </lineage>
</organism>
<comment type="function">
    <text evidence="1">The glycine cleavage system catalyzes the degradation of glycine.</text>
</comment>
<comment type="catalytic activity">
    <reaction evidence="1">
        <text>N(6)-[(R)-S(8)-aminomethyldihydrolipoyl]-L-lysyl-[protein] + (6S)-5,6,7,8-tetrahydrofolate = N(6)-[(R)-dihydrolipoyl]-L-lysyl-[protein] + (6R)-5,10-methylene-5,6,7,8-tetrahydrofolate + NH4(+)</text>
        <dbReference type="Rhea" id="RHEA:16945"/>
        <dbReference type="Rhea" id="RHEA-COMP:10475"/>
        <dbReference type="Rhea" id="RHEA-COMP:10492"/>
        <dbReference type="ChEBI" id="CHEBI:15636"/>
        <dbReference type="ChEBI" id="CHEBI:28938"/>
        <dbReference type="ChEBI" id="CHEBI:57453"/>
        <dbReference type="ChEBI" id="CHEBI:83100"/>
        <dbReference type="ChEBI" id="CHEBI:83143"/>
        <dbReference type="EC" id="2.1.2.10"/>
    </reaction>
</comment>
<comment type="subunit">
    <text evidence="1">The glycine cleavage system is composed of four proteins: P, T, L and H.</text>
</comment>
<comment type="similarity">
    <text evidence="1">Belongs to the GcvT family.</text>
</comment>
<protein>
    <recommendedName>
        <fullName evidence="1">Aminomethyltransferase</fullName>
        <ecNumber evidence="1">2.1.2.10</ecNumber>
    </recommendedName>
    <alternativeName>
        <fullName evidence="1">Glycine cleavage system T protein</fullName>
    </alternativeName>
</protein>
<feature type="chain" id="PRO_1000204635" description="Aminomethyltransferase">
    <location>
        <begin position="1"/>
        <end position="364"/>
    </location>
</feature>